<organism>
    <name type="scientific">Saccharomyces cerevisiae (strain ATCC 204508 / S288c)</name>
    <name type="common">Baker's yeast</name>
    <dbReference type="NCBI Taxonomy" id="559292"/>
    <lineage>
        <taxon>Eukaryota</taxon>
        <taxon>Fungi</taxon>
        <taxon>Dikarya</taxon>
        <taxon>Ascomycota</taxon>
        <taxon>Saccharomycotina</taxon>
        <taxon>Saccharomycetes</taxon>
        <taxon>Saccharomycetales</taxon>
        <taxon>Saccharomycetaceae</taxon>
        <taxon>Saccharomyces</taxon>
    </lineage>
</organism>
<keyword id="KW-0597">Phosphoprotein</keyword>
<keyword id="KW-1185">Reference proteome</keyword>
<comment type="interaction">
    <interactant intactId="EBI-25514">
        <id>P47115</id>
    </interactant>
    <interactant intactId="EBI-3719">
        <id>P38041</id>
        <label>BOI1</label>
    </interactant>
    <organismsDiffer>false</organismsDiffer>
    <experiments>3</experiments>
</comment>
<comment type="miscellaneous">
    <text evidence="2">Present with 1890 molecules/cell in log phase SD medium.</text>
</comment>
<reference key="1">
    <citation type="journal article" date="1996" name="Yeast">
        <title>Analysis of a 62 kb DNA sequence of chromosome X reveals 36 open reading frames and a gene cluster with a counterpart on chromosome XI.</title>
        <authorList>
            <person name="Huang M.-E."/>
            <person name="Manus V."/>
            <person name="Chuat J.-C."/>
            <person name="Galibert F."/>
        </authorList>
    </citation>
    <scope>NUCLEOTIDE SEQUENCE [GENOMIC DNA]</scope>
    <source>
        <strain>ATCC 204508 / S288c</strain>
    </source>
</reference>
<reference key="2">
    <citation type="journal article" date="1996" name="EMBO J.">
        <title>Complete nucleotide sequence of Saccharomyces cerevisiae chromosome X.</title>
        <authorList>
            <person name="Galibert F."/>
            <person name="Alexandraki D."/>
            <person name="Baur A."/>
            <person name="Boles E."/>
            <person name="Chalwatzis N."/>
            <person name="Chuat J.-C."/>
            <person name="Coster F."/>
            <person name="Cziepluch C."/>
            <person name="de Haan M."/>
            <person name="Domdey H."/>
            <person name="Durand P."/>
            <person name="Entian K.-D."/>
            <person name="Gatius M."/>
            <person name="Goffeau A."/>
            <person name="Grivell L.A."/>
            <person name="Hennemann A."/>
            <person name="Herbert C.J."/>
            <person name="Heumann K."/>
            <person name="Hilger F."/>
            <person name="Hollenberg C.P."/>
            <person name="Huang M.-E."/>
            <person name="Jacq C."/>
            <person name="Jauniaux J.-C."/>
            <person name="Katsoulou C."/>
            <person name="Kirchrath L."/>
            <person name="Kleine K."/>
            <person name="Kordes E."/>
            <person name="Koetter P."/>
            <person name="Liebl S."/>
            <person name="Louis E.J."/>
            <person name="Manus V."/>
            <person name="Mewes H.-W."/>
            <person name="Miosga T."/>
            <person name="Obermaier B."/>
            <person name="Perea J."/>
            <person name="Pohl T.M."/>
            <person name="Portetelle D."/>
            <person name="Pujol A."/>
            <person name="Purnelle B."/>
            <person name="Ramezani Rad M."/>
            <person name="Rasmussen S.W."/>
            <person name="Rose M."/>
            <person name="Rossau R."/>
            <person name="Schaaff-Gerstenschlaeger I."/>
            <person name="Smits P.H.M."/>
            <person name="Scarcez T."/>
            <person name="Soriano N."/>
            <person name="To Van D."/>
            <person name="Tzermia M."/>
            <person name="Van Broekhoven A."/>
            <person name="Vandenbol M."/>
            <person name="Wedler H."/>
            <person name="von Wettstein D."/>
            <person name="Wambutt R."/>
            <person name="Zagulski M."/>
            <person name="Zollner A."/>
            <person name="Karpfinger-Hartl L."/>
        </authorList>
    </citation>
    <scope>NUCLEOTIDE SEQUENCE [LARGE SCALE GENOMIC DNA]</scope>
    <source>
        <strain>ATCC 204508 / S288c</strain>
    </source>
</reference>
<reference key="3">
    <citation type="journal article" date="2014" name="G3 (Bethesda)">
        <title>The reference genome sequence of Saccharomyces cerevisiae: Then and now.</title>
        <authorList>
            <person name="Engel S.R."/>
            <person name="Dietrich F.S."/>
            <person name="Fisk D.G."/>
            <person name="Binkley G."/>
            <person name="Balakrishnan R."/>
            <person name="Costanzo M.C."/>
            <person name="Dwight S.S."/>
            <person name="Hitz B.C."/>
            <person name="Karra K."/>
            <person name="Nash R.S."/>
            <person name="Weng S."/>
            <person name="Wong E.D."/>
            <person name="Lloyd P."/>
            <person name="Skrzypek M.S."/>
            <person name="Miyasato S.R."/>
            <person name="Simison M."/>
            <person name="Cherry J.M."/>
        </authorList>
    </citation>
    <scope>GENOME REANNOTATION</scope>
    <source>
        <strain>ATCC 204508 / S288c</strain>
    </source>
</reference>
<reference key="4">
    <citation type="journal article" date="2003" name="Nature">
        <title>Global analysis of protein expression in yeast.</title>
        <authorList>
            <person name="Ghaemmaghami S."/>
            <person name="Huh W.-K."/>
            <person name="Bower K."/>
            <person name="Howson R.W."/>
            <person name="Belle A."/>
            <person name="Dephoure N."/>
            <person name="O'Shea E.K."/>
            <person name="Weissman J.S."/>
        </authorList>
    </citation>
    <scope>LEVEL OF PROTEIN EXPRESSION [LARGE SCALE ANALYSIS]</scope>
</reference>
<reference key="5">
    <citation type="journal article" date="2009" name="Science">
        <title>Global analysis of Cdk1 substrate phosphorylation sites provides insights into evolution.</title>
        <authorList>
            <person name="Holt L.J."/>
            <person name="Tuch B.B."/>
            <person name="Villen J."/>
            <person name="Johnson A.D."/>
            <person name="Gygi S.P."/>
            <person name="Morgan D.O."/>
        </authorList>
    </citation>
    <scope>PHOSPHORYLATION [LARGE SCALE ANALYSIS] AT SER-221</scope>
    <scope>IDENTIFICATION BY MASS SPECTROMETRY [LARGE SCALE ANALYSIS]</scope>
</reference>
<name>YJ26_YEAST</name>
<feature type="chain" id="PRO_0000203097" description="Uncharacterized protein YJR056C">
    <location>
        <begin position="1"/>
        <end position="236"/>
    </location>
</feature>
<feature type="region of interest" description="Disordered" evidence="1">
    <location>
        <begin position="186"/>
        <end position="236"/>
    </location>
</feature>
<feature type="compositionally biased region" description="Basic and acidic residues" evidence="1">
    <location>
        <begin position="201"/>
        <end position="236"/>
    </location>
</feature>
<feature type="modified residue" description="Phosphoserine" evidence="3">
    <location>
        <position position="221"/>
    </location>
</feature>
<accession>P47115</accession>
<accession>D6VWM7</accession>
<proteinExistence type="evidence at protein level"/>
<protein>
    <recommendedName>
        <fullName>Uncharacterized protein YJR056C</fullName>
    </recommendedName>
</protein>
<evidence type="ECO:0000256" key="1">
    <source>
        <dbReference type="SAM" id="MobiDB-lite"/>
    </source>
</evidence>
<evidence type="ECO:0000269" key="2">
    <source>
    </source>
</evidence>
<evidence type="ECO:0007744" key="3">
    <source>
    </source>
</evidence>
<sequence>MEQMHSLESSLPPEQPPTKQAIESLNLELSQEFKLAANAVTRLYRVANEKNSLTKHQGYLTCLDDILCALDSNVTADELRAWCYKRRNDILSNSQDKSLNPVKERERKLNKFSENQHRENEAHKEPFEKDSAVKYNFSFNESNGDLSNINENIAPKFRLSMPPLSVEHPPRNASRIKSWKARTINHGRGDTRNLNDITGLGHERERDRENTHYEKKPKLDSDSEVDIRSFRQDMDL</sequence>
<dbReference type="EMBL" id="Z49556">
    <property type="protein sequence ID" value="CAA89584.1"/>
    <property type="molecule type" value="Genomic_DNA"/>
</dbReference>
<dbReference type="EMBL" id="L47993">
    <property type="protein sequence ID" value="AAB39282.1"/>
    <property type="molecule type" value="Genomic_DNA"/>
</dbReference>
<dbReference type="EMBL" id="BK006943">
    <property type="protein sequence ID" value="DAA08843.1"/>
    <property type="molecule type" value="Genomic_DNA"/>
</dbReference>
<dbReference type="PIR" id="S57075">
    <property type="entry name" value="S57075"/>
</dbReference>
<dbReference type="RefSeq" id="NP_012590.3">
    <property type="nucleotide sequence ID" value="NM_001181714.3"/>
</dbReference>
<dbReference type="SMR" id="P47115"/>
<dbReference type="BioGRID" id="33812">
    <property type="interactions" value="96"/>
</dbReference>
<dbReference type="DIP" id="DIP-1698N"/>
<dbReference type="FunCoup" id="P47115">
    <property type="interactions" value="30"/>
</dbReference>
<dbReference type="IntAct" id="P47115">
    <property type="interactions" value="4"/>
</dbReference>
<dbReference type="MINT" id="P47115"/>
<dbReference type="STRING" id="4932.YJR056C"/>
<dbReference type="iPTMnet" id="P47115"/>
<dbReference type="PaxDb" id="4932-YJR056C"/>
<dbReference type="PeptideAtlas" id="P47115"/>
<dbReference type="EnsemblFungi" id="YJR056C_mRNA">
    <property type="protein sequence ID" value="YJR056C"/>
    <property type="gene ID" value="YJR056C"/>
</dbReference>
<dbReference type="GeneID" id="853518"/>
<dbReference type="KEGG" id="sce:YJR056C"/>
<dbReference type="AGR" id="SGD:S000003817"/>
<dbReference type="SGD" id="S000003817">
    <property type="gene designation" value="YJR056C"/>
</dbReference>
<dbReference type="VEuPathDB" id="FungiDB:YJR056C"/>
<dbReference type="eggNOG" id="ENOG502S6F0">
    <property type="taxonomic scope" value="Eukaryota"/>
</dbReference>
<dbReference type="HOGENOM" id="CLU_100331_1_0_1"/>
<dbReference type="InParanoid" id="P47115"/>
<dbReference type="OMA" id="QHSESDP"/>
<dbReference type="OrthoDB" id="21418at2759"/>
<dbReference type="BioCyc" id="YEAST:G3O-31690-MONOMER"/>
<dbReference type="BioGRID-ORCS" id="853518">
    <property type="hits" value="4 hits in 10 CRISPR screens"/>
</dbReference>
<dbReference type="PRO" id="PR:P47115"/>
<dbReference type="Proteomes" id="UP000002311">
    <property type="component" value="Chromosome X"/>
</dbReference>
<dbReference type="RNAct" id="P47115">
    <property type="molecule type" value="protein"/>
</dbReference>
<dbReference type="GO" id="GO:0005737">
    <property type="term" value="C:cytoplasm"/>
    <property type="evidence" value="ECO:0007005"/>
    <property type="project" value="SGD"/>
</dbReference>
<dbReference type="GO" id="GO:0005634">
    <property type="term" value="C:nucleus"/>
    <property type="evidence" value="ECO:0007005"/>
    <property type="project" value="SGD"/>
</dbReference>
<dbReference type="InterPro" id="IPR029196">
    <property type="entry name" value="HAPSTR1-like"/>
</dbReference>
<dbReference type="PANTHER" id="PTHR38645">
    <property type="entry name" value="CHROMOSOME 9, WHOLE GENOME SHOTGUN SEQUENCE"/>
    <property type="match status" value="1"/>
</dbReference>
<dbReference type="PANTHER" id="PTHR38645:SF1">
    <property type="entry name" value="YALI0F12243P"/>
    <property type="match status" value="1"/>
</dbReference>
<dbReference type="Pfam" id="PF15251">
    <property type="entry name" value="TAPR1-like"/>
    <property type="match status" value="1"/>
</dbReference>
<gene>
    <name type="ordered locus">YJR056C</name>
    <name type="ORF">J1710</name>
</gene>